<feature type="chain" id="PRO_0000063060" description="Putative pterin-4-alpha-carbinolamine dehydratase">
    <location>
        <begin position="1"/>
        <end position="142"/>
    </location>
</feature>
<evidence type="ECO:0000305" key="1"/>
<reference key="1">
    <citation type="journal article" date="1998" name="Science">
        <title>Genome sequence of the nematode C. elegans: a platform for investigating biology.</title>
        <authorList>
            <consortium name="The C. elegans sequencing consortium"/>
        </authorList>
    </citation>
    <scope>NUCLEOTIDE SEQUENCE [LARGE SCALE GENOMIC DNA]</scope>
    <source>
        <strain>Bristol N2</strain>
    </source>
</reference>
<sequence>MHSSYSHFLQRLRTSVSYLSVSHFPSTSSHRLFSTTIGVFARKKMPLLTESERTEQLSGLKTAGWKLVEGRDAIQKEFHFKDFNEAFGFMTRVGLKAEKMDHHPEWFNVYNKVDITLSTHDCGGLSPNDVKLATFIESIVKK</sequence>
<name>PHS_CAEEL</name>
<protein>
    <recommendedName>
        <fullName>Putative pterin-4-alpha-carbinolamine dehydratase</fullName>
        <shortName>PHS</shortName>
        <ecNumber>4.2.1.96</ecNumber>
    </recommendedName>
    <alternativeName>
        <fullName>4-alpha-hydroxy-tetrahydropterin dehydratase</fullName>
    </alternativeName>
    <alternativeName>
        <fullName>Pterin carbinolamine dehydratase</fullName>
        <shortName>PCD</shortName>
    </alternativeName>
</protein>
<organism>
    <name type="scientific">Caenorhabditis elegans</name>
    <dbReference type="NCBI Taxonomy" id="6239"/>
    <lineage>
        <taxon>Eukaryota</taxon>
        <taxon>Metazoa</taxon>
        <taxon>Ecdysozoa</taxon>
        <taxon>Nematoda</taxon>
        <taxon>Chromadorea</taxon>
        <taxon>Rhabditida</taxon>
        <taxon>Rhabditina</taxon>
        <taxon>Rhabditomorpha</taxon>
        <taxon>Rhabditoidea</taxon>
        <taxon>Rhabditidae</taxon>
        <taxon>Peloderinae</taxon>
        <taxon>Caenorhabditis</taxon>
    </lineage>
</organism>
<comment type="catalytic activity">
    <reaction>
        <text>(4aS,6R)-4a-hydroxy-L-erythro-5,6,7,8-tetrahydrobiopterin = (6R)-L-erythro-6,7-dihydrobiopterin + H2O</text>
        <dbReference type="Rhea" id="RHEA:11920"/>
        <dbReference type="ChEBI" id="CHEBI:15377"/>
        <dbReference type="ChEBI" id="CHEBI:15642"/>
        <dbReference type="ChEBI" id="CHEBI:43120"/>
        <dbReference type="EC" id="4.2.1.96"/>
    </reaction>
</comment>
<comment type="similarity">
    <text evidence="1">Belongs to the pterin-4-alpha-carbinolamine dehydratase family.</text>
</comment>
<proteinExistence type="inferred from homology"/>
<accession>Q9TZH6</accession>
<keyword id="KW-0456">Lyase</keyword>
<keyword id="KW-1185">Reference proteome</keyword>
<dbReference type="EC" id="4.2.1.96"/>
<dbReference type="EMBL" id="FO080731">
    <property type="protein sequence ID" value="CCD66239.1"/>
    <property type="molecule type" value="Genomic_DNA"/>
</dbReference>
<dbReference type="PIR" id="T33522">
    <property type="entry name" value="T33522"/>
</dbReference>
<dbReference type="RefSeq" id="NP_491982.2">
    <property type="nucleotide sequence ID" value="NM_059581.8"/>
</dbReference>
<dbReference type="SMR" id="Q9TZH6"/>
<dbReference type="BioGRID" id="53035">
    <property type="interactions" value="1"/>
</dbReference>
<dbReference type="FunCoup" id="Q9TZH6">
    <property type="interactions" value="562"/>
</dbReference>
<dbReference type="STRING" id="6239.T10B11.1.1"/>
<dbReference type="PaxDb" id="6239-T10B11.1"/>
<dbReference type="PeptideAtlas" id="Q9TZH6"/>
<dbReference type="EnsemblMetazoa" id="T10B11.1.1">
    <property type="protein sequence ID" value="T10B11.1.1"/>
    <property type="gene ID" value="WBGene00020397"/>
</dbReference>
<dbReference type="GeneID" id="188368"/>
<dbReference type="KEGG" id="cel:CELE_T10B11.1"/>
<dbReference type="UCSC" id="T10B11.1">
    <property type="organism name" value="c. elegans"/>
</dbReference>
<dbReference type="AGR" id="WB:WBGene00020397"/>
<dbReference type="CTD" id="188368"/>
<dbReference type="WormBase" id="T10B11.1">
    <property type="protein sequence ID" value="CE39768"/>
    <property type="gene ID" value="WBGene00020397"/>
    <property type="gene designation" value="pcbd-1"/>
</dbReference>
<dbReference type="eggNOG" id="KOG4073">
    <property type="taxonomic scope" value="Eukaryota"/>
</dbReference>
<dbReference type="GeneTree" id="ENSGT00390000007221"/>
<dbReference type="HOGENOM" id="CLU_081974_3_0_1"/>
<dbReference type="InParanoid" id="Q9TZH6"/>
<dbReference type="OMA" id="MTRVAMY"/>
<dbReference type="OrthoDB" id="277398at2759"/>
<dbReference type="PhylomeDB" id="Q9TZH6"/>
<dbReference type="Reactome" id="R-CEL-8964208">
    <property type="pathway name" value="Phenylalanine metabolism"/>
</dbReference>
<dbReference type="PRO" id="PR:Q9TZH6"/>
<dbReference type="Proteomes" id="UP000001940">
    <property type="component" value="Chromosome I"/>
</dbReference>
<dbReference type="Bgee" id="WBGene00020397">
    <property type="expression patterns" value="Expressed in larva and 4 other cell types or tissues"/>
</dbReference>
<dbReference type="GO" id="GO:0008124">
    <property type="term" value="F:4-alpha-hydroxytetrahydrobiopterin dehydratase activity"/>
    <property type="evidence" value="ECO:0000318"/>
    <property type="project" value="GO_Central"/>
</dbReference>
<dbReference type="GO" id="GO:0006729">
    <property type="term" value="P:tetrahydrobiopterin biosynthetic process"/>
    <property type="evidence" value="ECO:0007669"/>
    <property type="project" value="InterPro"/>
</dbReference>
<dbReference type="CDD" id="cd00914">
    <property type="entry name" value="PCD_DCoH_subfamily_b"/>
    <property type="match status" value="1"/>
</dbReference>
<dbReference type="FunFam" id="3.30.1360.20:FF:000001">
    <property type="entry name" value="Pterin-4-alpha-carbinolamine dehydratase 2"/>
    <property type="match status" value="1"/>
</dbReference>
<dbReference type="Gene3D" id="3.30.1360.20">
    <property type="entry name" value="Transcriptional coactivator/pterin dehydratase"/>
    <property type="match status" value="1"/>
</dbReference>
<dbReference type="HAMAP" id="MF_00434">
    <property type="entry name" value="Pterin_4_alpha"/>
    <property type="match status" value="1"/>
</dbReference>
<dbReference type="InterPro" id="IPR036428">
    <property type="entry name" value="PCD_sf"/>
</dbReference>
<dbReference type="InterPro" id="IPR001533">
    <property type="entry name" value="Pterin_deHydtase"/>
</dbReference>
<dbReference type="NCBIfam" id="NF002018">
    <property type="entry name" value="PRK00823.1-3"/>
    <property type="match status" value="1"/>
</dbReference>
<dbReference type="NCBIfam" id="NF002020">
    <property type="entry name" value="PRK00823.1-5"/>
    <property type="match status" value="1"/>
</dbReference>
<dbReference type="PANTHER" id="PTHR12599">
    <property type="entry name" value="PTERIN-4-ALPHA-CARBINOLAMINE DEHYDRATASE"/>
    <property type="match status" value="1"/>
</dbReference>
<dbReference type="PANTHER" id="PTHR12599:SF0">
    <property type="entry name" value="PTERIN-4-ALPHA-CARBINOLAMINE DEHYDRATASE"/>
    <property type="match status" value="1"/>
</dbReference>
<dbReference type="Pfam" id="PF01329">
    <property type="entry name" value="Pterin_4a"/>
    <property type="match status" value="1"/>
</dbReference>
<dbReference type="SUPFAM" id="SSF55248">
    <property type="entry name" value="PCD-like"/>
    <property type="match status" value="1"/>
</dbReference>
<gene>
    <name type="primary">pcbd-1</name>
    <name type="ORF">T10B11.1</name>
</gene>